<accession>Q6Z4T5</accession>
<accession>A0A0P0XCJ7</accession>
<accession>Q69S01</accession>
<accession>Q8S9E2</accession>
<evidence type="ECO:0000250" key="1"/>
<evidence type="ECO:0000255" key="2"/>
<evidence type="ECO:0000256" key="3">
    <source>
        <dbReference type="SAM" id="MobiDB-lite"/>
    </source>
</evidence>
<evidence type="ECO:0000269" key="4">
    <source>
    </source>
</evidence>
<evidence type="ECO:0000305" key="5"/>
<evidence type="ECO:0000305" key="6">
    <source>
    </source>
</evidence>
<name>POLIA_ORYSJ</name>
<keyword id="KW-0150">Chloroplast</keyword>
<keyword id="KW-0227">DNA damage</keyword>
<keyword id="KW-0234">DNA repair</keyword>
<keyword id="KW-0235">DNA replication</keyword>
<keyword id="KW-0238">DNA-binding</keyword>
<keyword id="KW-0239">DNA-directed DNA polymerase</keyword>
<keyword id="KW-0269">Exonuclease</keyword>
<keyword id="KW-0378">Hydrolase</keyword>
<keyword id="KW-0540">Nuclease</keyword>
<keyword id="KW-0548">Nucleotidyltransferase</keyword>
<keyword id="KW-0934">Plastid</keyword>
<keyword id="KW-1185">Reference proteome</keyword>
<keyword id="KW-0808">Transferase</keyword>
<keyword id="KW-0809">Transit peptide</keyword>
<protein>
    <recommendedName>
        <fullName>DNA polymerase I A, chloroplastic</fullName>
        <ecNumber>2.7.7.7</ecNumber>
    </recommendedName>
    <alternativeName>
        <fullName>DNA polymerase PolI-like A</fullName>
        <shortName>OsPolI-like A</shortName>
    </alternativeName>
    <alternativeName>
        <fullName>DNA polymerase gamma 1</fullName>
    </alternativeName>
</protein>
<comment type="function">
    <text evidence="1 4">In addition to polymerase activity, this DNA polymerase exhibits 5'-3' exonuclease activity (By similarity). May be required for DNA replication and accumulation in plastids.</text>
</comment>
<comment type="catalytic activity">
    <reaction>
        <text>DNA(n) + a 2'-deoxyribonucleoside 5'-triphosphate = DNA(n+1) + diphosphate</text>
        <dbReference type="Rhea" id="RHEA:22508"/>
        <dbReference type="Rhea" id="RHEA-COMP:17339"/>
        <dbReference type="Rhea" id="RHEA-COMP:17340"/>
        <dbReference type="ChEBI" id="CHEBI:33019"/>
        <dbReference type="ChEBI" id="CHEBI:61560"/>
        <dbReference type="ChEBI" id="CHEBI:173112"/>
        <dbReference type="EC" id="2.7.7.7"/>
    </reaction>
</comment>
<comment type="activity regulation">
    <text evidence="4">Inhibited by dideoxythymidine-triphosphate (ddTTP), but not by aphidicolin and N-ethylmaleimide.</text>
</comment>
<comment type="subcellular location">
    <subcellularLocation>
        <location evidence="6">Plastid</location>
        <location evidence="6">Chloroplast</location>
    </subcellularLocation>
</comment>
<comment type="tissue specificity">
    <text evidence="4">Expressed in shoot apical meristem, root apical meristem, leaf primordia and the marginal meristem.</text>
</comment>
<comment type="similarity">
    <text evidence="5">Belongs to the DNA polymerase type-A family.</text>
</comment>
<comment type="sequence caution" evidence="5">
    <conflict type="erroneous initiation">
        <sequence resource="EMBL-CDS" id="BAB40805"/>
    </conflict>
    <text>Truncated N-terminus.</text>
</comment>
<comment type="sequence caution" evidence="5">
    <conflict type="frameshift">
        <sequence resource="EMBL-CDS" id="BAB40805"/>
    </conflict>
</comment>
<comment type="sequence caution" evidence="5">
    <conflict type="erroneous gene model prediction">
        <sequence resource="EMBL-CDS" id="BAD32974"/>
    </conflict>
</comment>
<comment type="sequence caution" evidence="5">
    <conflict type="erroneous gene model prediction">
        <sequence resource="EMBL-CDS" id="BAD33362"/>
    </conflict>
</comment>
<sequence>MAVAPPLPPAPARQLRRWKGSSPRPPPWLSSPFRRTRYLSRPAFAAGGRQDYSPSSGMGVSKTGAFRLGLYGNLNVQSSVQEWVDETKRLFFLRTTNSVRNNITNGTTPLRVGNLRHDPSEDIRSSNYPSLYNQRERGPSNSIVNRHVDTDLAKHRVMYQSAHAVPAPFSVVNNDIKPLNMLDGSKEEIPWHDSVTMESSLPKVSKSEKTLVVDKAIPDKKEHKRITRKVTPNFPDKASLSTESKNARKLLATIYDKVLVVDNVESARSVVKLLTTKYKGFIHACDTEVANIDVKEETPVGHGEVICFSICSGNSDGEADFGNGKTCIWVDVLDGGRDVLMEFAPFFEDPFIKKVWHNYSFDIHVIENCGIKVAGFHADTMHLARLWDSSRRTDGGYSLEGLTNDYRVMDAVLKDIPKTGKVSMKTIFGRKKVRKDGSEGKTISIEPVEKLQREDRELWICYSSLDSMSTLKLYESLKNKLEAKEWIFDDCPRGTMYDFYEEYWRPFGALLVKMETEGVLVDRAYLSEIEKAAVTERELAADKFRKWASKHCPDAKYMNVNSDNQIRQLFFGGIENRNKRGETWPQSKTFKVPNDEGIATEGKKTPKSRTIKLFTIVEDLKIDMFTPTGWPSVSGDVLRSLAGKIPTDHIYKIDDGQEFDEDGSSLELPEQDIEDTSPYGTAYEAFGGGKKGREACHAIAALCEVFSIDKLISGFIVPLQGDRISCKEGRIHCSLNINTETGRLSARTPNLQNQPALEKDRYKIRHAFVAAPGNTLIVADYGQLELRILAHLTNCKSMLEAFKAGGDFHSRTAMNMYQHVRDAVEEKKVLLEWHPQPGQDKPPVPLLKDAFGAERRKAKMLNFSIAYGKTAVGLSWDWKVSVREARDTLKLWYRDRKEVSAWQKKQKAFALEKCEVYTLLGRSRQFPNMTHAGPGQKGHVERAAINAPVQGSAADVAMCAMLEIERNARLKELGWRLLLQVHDEVILEGPTESAEEAKTIVVECMSKPFYGTNILKVDLAVDAKYAKSWYAAK</sequence>
<organism>
    <name type="scientific">Oryza sativa subsp. japonica</name>
    <name type="common">Rice</name>
    <dbReference type="NCBI Taxonomy" id="39947"/>
    <lineage>
        <taxon>Eukaryota</taxon>
        <taxon>Viridiplantae</taxon>
        <taxon>Streptophyta</taxon>
        <taxon>Embryophyta</taxon>
        <taxon>Tracheophyta</taxon>
        <taxon>Spermatophyta</taxon>
        <taxon>Magnoliopsida</taxon>
        <taxon>Liliopsida</taxon>
        <taxon>Poales</taxon>
        <taxon>Poaceae</taxon>
        <taxon>BOP clade</taxon>
        <taxon>Oryzoideae</taxon>
        <taxon>Oryzeae</taxon>
        <taxon>Oryzinae</taxon>
        <taxon>Oryza</taxon>
        <taxon>Oryza sativa</taxon>
    </lineage>
</organism>
<reference key="1">
    <citation type="journal article" date="2002" name="Nucleic Acids Res.">
        <title>A novel DNA polymerase homologous to Escherichia coli DNA polymerase I from a higher plant, rice (Oryza sativa L.).</title>
        <authorList>
            <person name="Kimura S."/>
            <person name="Uchiyama Y."/>
            <person name="Kasai N."/>
            <person name="Saotome A."/>
            <person name="Ueda T."/>
            <person name="Ando T."/>
            <person name="Ishibashi T."/>
            <person name="Namekawa S."/>
            <person name="Oshige M."/>
            <person name="Furukawa T."/>
            <person name="Yamamoto T."/>
            <person name="Hashimoto J."/>
            <person name="Sakaguchi K."/>
        </authorList>
    </citation>
    <scope>NUCLEOTIDE SEQUENCE [MRNA]</scope>
    <scope>FUNCTION</scope>
    <scope>ACTIVITY REGULATION</scope>
    <scope>SUBCELLULAR LOCATION</scope>
    <scope>TISSUE SPECIFICITY</scope>
</reference>
<reference key="2">
    <citation type="journal article" date="2005" name="Nature">
        <title>The map-based sequence of the rice genome.</title>
        <authorList>
            <consortium name="International rice genome sequencing project (IRGSP)"/>
        </authorList>
    </citation>
    <scope>NUCLEOTIDE SEQUENCE [LARGE SCALE GENOMIC DNA]</scope>
    <source>
        <strain>cv. Nipponbare</strain>
    </source>
</reference>
<reference key="3">
    <citation type="journal article" date="2008" name="Nucleic Acids Res.">
        <title>The rice annotation project database (RAP-DB): 2008 update.</title>
        <authorList>
            <consortium name="The rice annotation project (RAP)"/>
        </authorList>
    </citation>
    <scope>GENOME REANNOTATION</scope>
    <source>
        <strain>cv. Nipponbare</strain>
    </source>
</reference>
<reference key="4">
    <citation type="journal article" date="2013" name="Rice">
        <title>Improvement of the Oryza sativa Nipponbare reference genome using next generation sequence and optical map data.</title>
        <authorList>
            <person name="Kawahara Y."/>
            <person name="de la Bastide M."/>
            <person name="Hamilton J.P."/>
            <person name="Kanamori H."/>
            <person name="McCombie W.R."/>
            <person name="Ouyang S."/>
            <person name="Schwartz D.C."/>
            <person name="Tanaka T."/>
            <person name="Wu J."/>
            <person name="Zhou S."/>
            <person name="Childs K.L."/>
            <person name="Davidson R.M."/>
            <person name="Lin H."/>
            <person name="Quesada-Ocampo L."/>
            <person name="Vaillancourt B."/>
            <person name="Sakai H."/>
            <person name="Lee S.S."/>
            <person name="Kim J."/>
            <person name="Numa H."/>
            <person name="Itoh T."/>
            <person name="Buell C.R."/>
            <person name="Matsumoto T."/>
        </authorList>
    </citation>
    <scope>GENOME REANNOTATION</scope>
    <source>
        <strain>cv. Nipponbare</strain>
    </source>
</reference>
<reference key="5">
    <citation type="journal article" date="2005" name="PLoS Biol.">
        <title>The genomes of Oryza sativa: a history of duplications.</title>
        <authorList>
            <person name="Yu J."/>
            <person name="Wang J."/>
            <person name="Lin W."/>
            <person name="Li S."/>
            <person name="Li H."/>
            <person name="Zhou J."/>
            <person name="Ni P."/>
            <person name="Dong W."/>
            <person name="Hu S."/>
            <person name="Zeng C."/>
            <person name="Zhang J."/>
            <person name="Zhang Y."/>
            <person name="Li R."/>
            <person name="Xu Z."/>
            <person name="Li S."/>
            <person name="Li X."/>
            <person name="Zheng H."/>
            <person name="Cong L."/>
            <person name="Lin L."/>
            <person name="Yin J."/>
            <person name="Geng J."/>
            <person name="Li G."/>
            <person name="Shi J."/>
            <person name="Liu J."/>
            <person name="Lv H."/>
            <person name="Li J."/>
            <person name="Wang J."/>
            <person name="Deng Y."/>
            <person name="Ran L."/>
            <person name="Shi X."/>
            <person name="Wang X."/>
            <person name="Wu Q."/>
            <person name="Li C."/>
            <person name="Ren X."/>
            <person name="Wang J."/>
            <person name="Wang X."/>
            <person name="Li D."/>
            <person name="Liu D."/>
            <person name="Zhang X."/>
            <person name="Ji Z."/>
            <person name="Zhao W."/>
            <person name="Sun Y."/>
            <person name="Zhang Z."/>
            <person name="Bao J."/>
            <person name="Han Y."/>
            <person name="Dong L."/>
            <person name="Ji J."/>
            <person name="Chen P."/>
            <person name="Wu S."/>
            <person name="Liu J."/>
            <person name="Xiao Y."/>
            <person name="Bu D."/>
            <person name="Tan J."/>
            <person name="Yang L."/>
            <person name="Ye C."/>
            <person name="Zhang J."/>
            <person name="Xu J."/>
            <person name="Zhou Y."/>
            <person name="Yu Y."/>
            <person name="Zhang B."/>
            <person name="Zhuang S."/>
            <person name="Wei H."/>
            <person name="Liu B."/>
            <person name="Lei M."/>
            <person name="Yu H."/>
            <person name="Li Y."/>
            <person name="Xu H."/>
            <person name="Wei S."/>
            <person name="He X."/>
            <person name="Fang L."/>
            <person name="Zhang Z."/>
            <person name="Zhang Y."/>
            <person name="Huang X."/>
            <person name="Su Z."/>
            <person name="Tong W."/>
            <person name="Li J."/>
            <person name="Tong Z."/>
            <person name="Li S."/>
            <person name="Ye J."/>
            <person name="Wang L."/>
            <person name="Fang L."/>
            <person name="Lei T."/>
            <person name="Chen C.-S."/>
            <person name="Chen H.-C."/>
            <person name="Xu Z."/>
            <person name="Li H."/>
            <person name="Huang H."/>
            <person name="Zhang F."/>
            <person name="Xu H."/>
            <person name="Li N."/>
            <person name="Zhao C."/>
            <person name="Li S."/>
            <person name="Dong L."/>
            <person name="Huang Y."/>
            <person name="Li L."/>
            <person name="Xi Y."/>
            <person name="Qi Q."/>
            <person name="Li W."/>
            <person name="Zhang B."/>
            <person name="Hu W."/>
            <person name="Zhang Y."/>
            <person name="Tian X."/>
            <person name="Jiao Y."/>
            <person name="Liang X."/>
            <person name="Jin J."/>
            <person name="Gao L."/>
            <person name="Zheng W."/>
            <person name="Hao B."/>
            <person name="Liu S.-M."/>
            <person name="Wang W."/>
            <person name="Yuan L."/>
            <person name="Cao M."/>
            <person name="McDermott J."/>
            <person name="Samudrala R."/>
            <person name="Wang J."/>
            <person name="Wong G.K.-S."/>
            <person name="Yang H."/>
        </authorList>
    </citation>
    <scope>NUCLEOTIDE SEQUENCE [LARGE SCALE GENOMIC DNA]</scope>
    <source>
        <strain>cv. Nipponbare</strain>
    </source>
</reference>
<reference key="6">
    <citation type="journal article" date="2003" name="Science">
        <title>Collection, mapping, and annotation of over 28,000 cDNA clones from japonica rice.</title>
        <authorList>
            <consortium name="The rice full-length cDNA consortium"/>
        </authorList>
    </citation>
    <scope>NUCLEOTIDE SEQUENCE [LARGE SCALE MRNA]</scope>
    <source>
        <strain>cv. Nipponbare</strain>
    </source>
</reference>
<gene>
    <name type="ordered locus">Os08g0175300</name>
    <name type="ordered locus">LOC_Os08g07840</name>
    <name type="ORF">OJ1134_B10.8-1</name>
    <name type="ORF">OJ1134_B10.8-2</name>
    <name type="ORF">OsJ_26226</name>
    <name type="ORF">OSJNBa0054L03.39-1</name>
    <name type="ORF">OSJNBa0054L03.39-2</name>
</gene>
<dbReference type="EC" id="2.7.7.7"/>
<dbReference type="EMBL" id="AB047689">
    <property type="protein sequence ID" value="BAB40805.2"/>
    <property type="status" value="ALT_SEQ"/>
    <property type="molecule type" value="mRNA"/>
</dbReference>
<dbReference type="EMBL" id="AP003882">
    <property type="protein sequence ID" value="BAD05227.1"/>
    <property type="molecule type" value="Genomic_DNA"/>
</dbReference>
<dbReference type="EMBL" id="AP003882">
    <property type="protein sequence ID" value="BAD32974.1"/>
    <property type="status" value="ALT_SEQ"/>
    <property type="molecule type" value="Genomic_DNA"/>
</dbReference>
<dbReference type="EMBL" id="AP005164">
    <property type="protein sequence ID" value="BAD05554.1"/>
    <property type="molecule type" value="Genomic_DNA"/>
</dbReference>
<dbReference type="EMBL" id="AP005164">
    <property type="protein sequence ID" value="BAD33362.1"/>
    <property type="status" value="ALT_SEQ"/>
    <property type="molecule type" value="Genomic_DNA"/>
</dbReference>
<dbReference type="EMBL" id="AP008214">
    <property type="protein sequence ID" value="BAF23026.1"/>
    <property type="molecule type" value="Genomic_DNA"/>
</dbReference>
<dbReference type="EMBL" id="AP014964">
    <property type="protein sequence ID" value="BAT04060.1"/>
    <property type="molecule type" value="Genomic_DNA"/>
</dbReference>
<dbReference type="EMBL" id="CM000145">
    <property type="protein sequence ID" value="EEE68133.1"/>
    <property type="molecule type" value="Genomic_DNA"/>
</dbReference>
<dbReference type="EMBL" id="AK103236">
    <property type="protein sequence ID" value="BAG95967.1"/>
    <property type="molecule type" value="mRNA"/>
</dbReference>
<dbReference type="RefSeq" id="XP_015650956.1">
    <property type="nucleotide sequence ID" value="XM_015795470.1"/>
</dbReference>
<dbReference type="SMR" id="Q6Z4T5"/>
<dbReference type="FunCoup" id="Q6Z4T5">
    <property type="interactions" value="70"/>
</dbReference>
<dbReference type="STRING" id="39947.Q6Z4T5"/>
<dbReference type="PaxDb" id="39947-Q6Z4T5"/>
<dbReference type="EnsemblPlants" id="Os08t0175300-01">
    <property type="protein sequence ID" value="Os08t0175300-01"/>
    <property type="gene ID" value="Os08g0175300"/>
</dbReference>
<dbReference type="Gramene" id="Os08t0175300-01">
    <property type="protein sequence ID" value="Os08t0175300-01"/>
    <property type="gene ID" value="Os08g0175300"/>
</dbReference>
<dbReference type="KEGG" id="dosa:Os08g0175300"/>
<dbReference type="eggNOG" id="KOG0950">
    <property type="taxonomic scope" value="Eukaryota"/>
</dbReference>
<dbReference type="HOGENOM" id="CLU_004638_0_0_1"/>
<dbReference type="InParanoid" id="Q6Z4T5"/>
<dbReference type="OMA" id="NGREACH"/>
<dbReference type="OrthoDB" id="275278at2759"/>
<dbReference type="Proteomes" id="UP000000763">
    <property type="component" value="Chromosome 8"/>
</dbReference>
<dbReference type="Proteomes" id="UP000007752">
    <property type="component" value="Chromosome 8"/>
</dbReference>
<dbReference type="Proteomes" id="UP000059680">
    <property type="component" value="Chromosome 8"/>
</dbReference>
<dbReference type="ExpressionAtlas" id="Q6Z4T5">
    <property type="expression patterns" value="baseline and differential"/>
</dbReference>
<dbReference type="GO" id="GO:0009507">
    <property type="term" value="C:chloroplast"/>
    <property type="evidence" value="ECO:0000314"/>
    <property type="project" value="UniProtKB"/>
</dbReference>
<dbReference type="GO" id="GO:0008408">
    <property type="term" value="F:3'-5' exonuclease activity"/>
    <property type="evidence" value="ECO:0007669"/>
    <property type="project" value="InterPro"/>
</dbReference>
<dbReference type="GO" id="GO:0003677">
    <property type="term" value="F:DNA binding"/>
    <property type="evidence" value="ECO:0007669"/>
    <property type="project" value="UniProtKB-KW"/>
</dbReference>
<dbReference type="GO" id="GO:0003887">
    <property type="term" value="F:DNA-directed DNA polymerase activity"/>
    <property type="evidence" value="ECO:0000314"/>
    <property type="project" value="UniProtKB"/>
</dbReference>
<dbReference type="GO" id="GO:0006261">
    <property type="term" value="P:DNA-templated DNA replication"/>
    <property type="evidence" value="ECO:0007669"/>
    <property type="project" value="InterPro"/>
</dbReference>
<dbReference type="GO" id="GO:0006302">
    <property type="term" value="P:double-strand break repair"/>
    <property type="evidence" value="ECO:0000318"/>
    <property type="project" value="GO_Central"/>
</dbReference>
<dbReference type="CDD" id="cd08640">
    <property type="entry name" value="DNA_pol_A_plastid_like"/>
    <property type="match status" value="1"/>
</dbReference>
<dbReference type="CDD" id="cd06139">
    <property type="entry name" value="DNA_polA_I_Ecoli_like_exo"/>
    <property type="match status" value="1"/>
</dbReference>
<dbReference type="FunFam" id="1.10.150.20:FF:000034">
    <property type="entry name" value="DNA polymerase I"/>
    <property type="match status" value="1"/>
</dbReference>
<dbReference type="FunFam" id="3.30.420.10:FF:000051">
    <property type="entry name" value="DNA polymerase I"/>
    <property type="match status" value="1"/>
</dbReference>
<dbReference type="Gene3D" id="3.30.70.370">
    <property type="match status" value="1"/>
</dbReference>
<dbReference type="Gene3D" id="1.10.150.20">
    <property type="entry name" value="5' to 3' exonuclease, C-terminal subdomain"/>
    <property type="match status" value="1"/>
</dbReference>
<dbReference type="Gene3D" id="3.30.420.10">
    <property type="entry name" value="Ribonuclease H-like superfamily/Ribonuclease H"/>
    <property type="match status" value="1"/>
</dbReference>
<dbReference type="Gene3D" id="1.20.1060.10">
    <property type="entry name" value="Taq DNA Polymerase, Chain T, domain 4"/>
    <property type="match status" value="1"/>
</dbReference>
<dbReference type="InterPro" id="IPR002562">
    <property type="entry name" value="3'-5'_exonuclease_dom"/>
</dbReference>
<dbReference type="InterPro" id="IPR001098">
    <property type="entry name" value="DNA-dir_DNA_pol_A_palm_dom"/>
</dbReference>
<dbReference type="InterPro" id="IPR043502">
    <property type="entry name" value="DNA/RNA_pol_sf"/>
</dbReference>
<dbReference type="InterPro" id="IPR002298">
    <property type="entry name" value="DNA_polymerase_A"/>
</dbReference>
<dbReference type="InterPro" id="IPR012337">
    <property type="entry name" value="RNaseH-like_sf"/>
</dbReference>
<dbReference type="InterPro" id="IPR036397">
    <property type="entry name" value="RNaseH_sf"/>
</dbReference>
<dbReference type="PANTHER" id="PTHR10133">
    <property type="entry name" value="DNA POLYMERASE I"/>
    <property type="match status" value="1"/>
</dbReference>
<dbReference type="PANTHER" id="PTHR10133:SF27">
    <property type="entry name" value="DNA POLYMERASE NU"/>
    <property type="match status" value="1"/>
</dbReference>
<dbReference type="Pfam" id="PF00476">
    <property type="entry name" value="DNA_pol_A"/>
    <property type="match status" value="2"/>
</dbReference>
<dbReference type="Pfam" id="PF01612">
    <property type="entry name" value="DNA_pol_A_exo1"/>
    <property type="match status" value="1"/>
</dbReference>
<dbReference type="PRINTS" id="PR00868">
    <property type="entry name" value="DNAPOLI"/>
</dbReference>
<dbReference type="SMART" id="SM00482">
    <property type="entry name" value="POLAc"/>
    <property type="match status" value="1"/>
</dbReference>
<dbReference type="SUPFAM" id="SSF56672">
    <property type="entry name" value="DNA/RNA polymerases"/>
    <property type="match status" value="1"/>
</dbReference>
<dbReference type="SUPFAM" id="SSF53098">
    <property type="entry name" value="Ribonuclease H-like"/>
    <property type="match status" value="1"/>
</dbReference>
<proteinExistence type="evidence at transcript level"/>
<feature type="transit peptide" description="Chloroplast" evidence="2">
    <location>
        <begin position="1"/>
        <end position="55"/>
    </location>
</feature>
<feature type="chain" id="PRO_0000429311" description="DNA polymerase I A, chloroplastic">
    <location>
        <begin position="56"/>
        <end position="1033"/>
    </location>
</feature>
<feature type="domain" description="3'-5' exonuclease">
    <location>
        <begin position="321"/>
        <end position="482"/>
    </location>
</feature>
<feature type="region of interest" description="Disordered" evidence="3">
    <location>
        <begin position="1"/>
        <end position="32"/>
    </location>
</feature>
<feature type="region of interest" description="Disordered" evidence="3">
    <location>
        <begin position="104"/>
        <end position="142"/>
    </location>
</feature>
<feature type="region of interest" description="Polymerase">
    <location>
        <begin position="696"/>
        <end position="1030"/>
    </location>
</feature>
<feature type="compositionally biased region" description="Pro residues" evidence="3">
    <location>
        <begin position="1"/>
        <end position="11"/>
    </location>
</feature>
<feature type="compositionally biased region" description="Basic and acidic residues" evidence="3">
    <location>
        <begin position="115"/>
        <end position="124"/>
    </location>
</feature>
<feature type="compositionally biased region" description="Polar residues" evidence="3">
    <location>
        <begin position="125"/>
        <end position="142"/>
    </location>
</feature>
<feature type="sequence conflict" description="In Ref. 1; BAB40805." evidence="5" ref="1">
    <original>A</original>
    <variation>V</variation>
    <location>
        <position position="756"/>
    </location>
</feature>